<comment type="function">
    <text evidence="3 4 5 8 10">Cytochrome P450 monooxygenase; part of the gene clusters that mediate the biosynthesis of AM-toxins, host-selective toxins (HSTs) causing Alternaria blotch on apple, a worldwide distributed disease (PubMed:17990954). AM-toxins are cyclic depsipeptides containing the 3 residues 2-hydroxy-isovaleric acid (2-HIV), dehydroalanine, L-alanine which are common for all 3 AM-toxins I to III. The fourth precursor is L-alpha-amino-methoxyphenyl-valeric acid (L-Amv) for AM-toxin I, L-alpha-amino-phenyl-valeric acid (L-Apv) for AM-toxin II, and L-alpha-amino-hydroxyphenyl-valeric acid (L-Ahv) for AM-toxin III (Probable). AM-toxins have two target sites for affecting susceptible apple cells; they cause invagination of the plasma membrane and electrolyte loss and chloroplast disorganization (PubMed:22846083). The non-ribosomal peptide synthetase AMT1 contains 4 catalytic modules and is responsible for activation of each residue in AM-toxin (PubMed:10875335). The aldo-keto reductase AMT2 catalyzes the conversion of 2-keto-isovaleric acid (2-KIV) to 2-hydroxy-isovaleric acid (2-HIV), one of the precursor residues incorporated by AMT1 during AM-toxin biosynthesis, by reduction of its ketone to an alcohol (PubMed:15066029). The cytochrome P450 monooxygenase AMT3 and the thioesterase AMT4 are also important for AM-toxin production, but their exact function within the AM-toxin biosynthesis are not known yet (PubMed:17990954). Up to 21 proteins (including AMT1 to AMT4) are predicted to be involved in AM-toxin biosynthesis since their expression ishighly up-regulated in AM-toxin-producing cultures (PubMed:17990954).</text>
</comment>
<comment type="cofactor">
    <cofactor evidence="1">
        <name>heme</name>
        <dbReference type="ChEBI" id="CHEBI:30413"/>
    </cofactor>
</comment>
<comment type="pathway">
    <text evidence="5">Mycotoxin biosynthesis.</text>
</comment>
<comment type="subcellular location">
    <subcellularLocation>
        <location evidence="2">Membrane</location>
        <topology evidence="2">Single-pass membrane protein</topology>
    </subcellularLocation>
</comment>
<comment type="induction">
    <text evidence="5">Expression is up-regulated more than 10 fold in toxin producing cultures.</text>
</comment>
<comment type="disruption phenotype">
    <text evidence="5">Produces smaller amounts of AM-toxin than the wild type but still causes lesions on apple leaves.</text>
</comment>
<comment type="miscellaneous">
    <text evidence="5">Gene clusters encoding host-selective toxins (HSTs) are localized on conditionally dispensable chromosomes (CDCs), also called supernumerary chromosomes, where they are present in multiple copies (PubMed:17990954). The CDCs are not essential for saprophytic growth but controls host-selective pathogenicity (PubMed:17990954).</text>
</comment>
<comment type="similarity">
    <text evidence="9">Belongs to the cytochrome P450 family.</text>
</comment>
<feature type="chain" id="PRO_0000444818" description="Cytochrome P450 monooxygenase AMT3">
    <location>
        <begin position="1"/>
        <end position="489"/>
    </location>
</feature>
<feature type="transmembrane region" description="Helical" evidence="2">
    <location>
        <begin position="292"/>
        <end position="312"/>
    </location>
</feature>
<feature type="binding site" description="axial binding residue" evidence="1">
    <location>
        <position position="436"/>
    </location>
    <ligand>
        <name>heme</name>
        <dbReference type="ChEBI" id="CHEBI:30413"/>
    </ligand>
    <ligandPart>
        <name>Fe</name>
        <dbReference type="ChEBI" id="CHEBI:18248"/>
    </ligandPart>
</feature>
<reference key="1">
    <citation type="journal article" date="2004" name="Mol. Microbiol.">
        <title>Dissection of the host range of the fungal plant pathogen Alternaria alternata by modification of secondary metabolism.</title>
        <authorList>
            <person name="Ito K."/>
            <person name="Tanaka T."/>
            <person name="Hatta R."/>
            <person name="Yamamoto M."/>
            <person name="Akimitsu K."/>
            <person name="Tsuge T."/>
        </authorList>
    </citation>
    <scope>NUCLEOTIDE SEQUENCE [GENOMIC DNA]</scope>
    <scope>FUNCTION</scope>
    <source>
        <strain>NBRC 8984</strain>
    </source>
</reference>
<reference key="2">
    <citation type="journal article" date="2007" name="Mol. Plant Microbe Interact.">
        <title>Expression profiles of genes encoded by the supernumerary chromosome controlling AM-toxin biosynthesis and pathogenicity in the apple pathotype of Alternaria alternata.</title>
        <authorList>
            <person name="Harimoto Y."/>
            <person name="Hatta R."/>
            <person name="Kodama M."/>
            <person name="Yamamoto M."/>
            <person name="Otani H."/>
            <person name="Tsuge T."/>
        </authorList>
    </citation>
    <scope>NUCLEOTIDE SEQUENCE [GENOMIC DNA]</scope>
    <scope>FUNCTION</scope>
    <scope>DISRUPTION PHENOTYPE</scope>
    <scope>INDUCTION</scope>
    <scope>PATHWAY</scope>
    <source>
        <strain>NBRC 8984</strain>
    </source>
</reference>
<reference key="3">
    <citation type="journal article" date="2000" name="Mol. Plant Microbe Interact.">
        <title>Cloning and characterization of a cyclic peptide synthetase gene from Alternaria alternata apple pathotype whose product is involved in AM-toxin synthesis and pathogenicity.</title>
        <authorList>
            <person name="Johnson R.D."/>
            <person name="Johnson L."/>
            <person name="Itoh Y."/>
            <person name="Kodama M."/>
            <person name="Otani H."/>
            <person name="Kohmoto K."/>
        </authorList>
    </citation>
    <scope>FUNCTION</scope>
    <source>
        <strain>M-71</strain>
    </source>
</reference>
<reference key="4">
    <citation type="journal article" date="2013" name="FEMS Microbiol. Rev.">
        <title>Host-selective toxins produced by the plant pathogenic fungus Alternaria alternata.</title>
        <authorList>
            <person name="Tsuge T."/>
            <person name="Harimoto Y."/>
            <person name="Akimitsu K."/>
            <person name="Ohtani K."/>
            <person name="Kodama M."/>
            <person name="Akagi Y."/>
            <person name="Egusa M."/>
            <person name="Yamamoto M."/>
            <person name="Otani H."/>
        </authorList>
    </citation>
    <scope>REVIEW ON HOST-SELECTIVE TOXINS</scope>
</reference>
<keyword id="KW-0349">Heme</keyword>
<keyword id="KW-0408">Iron</keyword>
<keyword id="KW-0472">Membrane</keyword>
<keyword id="KW-0479">Metal-binding</keyword>
<keyword id="KW-0503">Monooxygenase</keyword>
<keyword id="KW-0560">Oxidoreductase</keyword>
<keyword id="KW-0812">Transmembrane</keyword>
<keyword id="KW-1133">Transmembrane helix</keyword>
<keyword id="KW-0843">Virulence</keyword>
<protein>
    <recommendedName>
        <fullName evidence="7">Cytochrome P450 monooxygenase AMT3</fullName>
        <ecNumber evidence="11">1.-.-.-</ecNumber>
    </recommendedName>
    <alternativeName>
        <fullName evidence="6">AM-toxin biosynthesis protein 3</fullName>
    </alternativeName>
</protein>
<name>AMT3_ALTAL</name>
<gene>
    <name evidence="7" type="primary">AMT3</name>
</gene>
<evidence type="ECO:0000250" key="1">
    <source>
        <dbReference type="UniProtKB" id="P04798"/>
    </source>
</evidence>
<evidence type="ECO:0000255" key="2"/>
<evidence type="ECO:0000269" key="3">
    <source>
    </source>
</evidence>
<evidence type="ECO:0000269" key="4">
    <source>
    </source>
</evidence>
<evidence type="ECO:0000269" key="5">
    <source>
    </source>
</evidence>
<evidence type="ECO:0000303" key="6">
    <source>
    </source>
</evidence>
<evidence type="ECO:0000303" key="7">
    <source>
    </source>
</evidence>
<evidence type="ECO:0000303" key="8">
    <source>
    </source>
</evidence>
<evidence type="ECO:0000305" key="9"/>
<evidence type="ECO:0000305" key="10">
    <source>
    </source>
</evidence>
<evidence type="ECO:0000305" key="11">
    <source>
    </source>
</evidence>
<dbReference type="EC" id="1.-.-.-" evidence="11"/>
<dbReference type="EMBL" id="AB525198">
    <property type="protein sequence ID" value="BAF76161.2"/>
    <property type="molecule type" value="Genomic_DNA"/>
</dbReference>
<dbReference type="SMR" id="A7VMU4"/>
<dbReference type="VEuPathDB" id="FungiDB:CC77DRAFT_544438"/>
<dbReference type="GO" id="GO:0016020">
    <property type="term" value="C:membrane"/>
    <property type="evidence" value="ECO:0007669"/>
    <property type="project" value="UniProtKB-SubCell"/>
</dbReference>
<dbReference type="GO" id="GO:0020037">
    <property type="term" value="F:heme binding"/>
    <property type="evidence" value="ECO:0007669"/>
    <property type="project" value="InterPro"/>
</dbReference>
<dbReference type="GO" id="GO:0005506">
    <property type="term" value="F:iron ion binding"/>
    <property type="evidence" value="ECO:0007669"/>
    <property type="project" value="InterPro"/>
</dbReference>
<dbReference type="GO" id="GO:0004497">
    <property type="term" value="F:monooxygenase activity"/>
    <property type="evidence" value="ECO:0007669"/>
    <property type="project" value="UniProtKB-KW"/>
</dbReference>
<dbReference type="GO" id="GO:0016705">
    <property type="term" value="F:oxidoreductase activity, acting on paired donors, with incorporation or reduction of molecular oxygen"/>
    <property type="evidence" value="ECO:0007669"/>
    <property type="project" value="InterPro"/>
</dbReference>
<dbReference type="GO" id="GO:0009058">
    <property type="term" value="P:biosynthetic process"/>
    <property type="evidence" value="ECO:0007669"/>
    <property type="project" value="UniProtKB-ARBA"/>
</dbReference>
<dbReference type="CDD" id="cd11058">
    <property type="entry name" value="CYP60B-like"/>
    <property type="match status" value="1"/>
</dbReference>
<dbReference type="Gene3D" id="1.10.630.10">
    <property type="entry name" value="Cytochrome P450"/>
    <property type="match status" value="1"/>
</dbReference>
<dbReference type="InterPro" id="IPR001128">
    <property type="entry name" value="Cyt_P450"/>
</dbReference>
<dbReference type="InterPro" id="IPR017972">
    <property type="entry name" value="Cyt_P450_CS"/>
</dbReference>
<dbReference type="InterPro" id="IPR002401">
    <property type="entry name" value="Cyt_P450_E_grp-I"/>
</dbReference>
<dbReference type="InterPro" id="IPR036396">
    <property type="entry name" value="Cyt_P450_sf"/>
</dbReference>
<dbReference type="InterPro" id="IPR050121">
    <property type="entry name" value="Cytochrome_P450_monoxygenase"/>
</dbReference>
<dbReference type="PANTHER" id="PTHR24305">
    <property type="entry name" value="CYTOCHROME P450"/>
    <property type="match status" value="1"/>
</dbReference>
<dbReference type="PANTHER" id="PTHR24305:SF210">
    <property type="entry name" value="CYTOCHROME P450 MONOOXYGENASE ASQL-RELATED"/>
    <property type="match status" value="1"/>
</dbReference>
<dbReference type="Pfam" id="PF00067">
    <property type="entry name" value="p450"/>
    <property type="match status" value="1"/>
</dbReference>
<dbReference type="PRINTS" id="PR00463">
    <property type="entry name" value="EP450I"/>
</dbReference>
<dbReference type="PRINTS" id="PR00385">
    <property type="entry name" value="P450"/>
</dbReference>
<dbReference type="SUPFAM" id="SSF48264">
    <property type="entry name" value="Cytochrome P450"/>
    <property type="match status" value="1"/>
</dbReference>
<dbReference type="PROSITE" id="PS00086">
    <property type="entry name" value="CYTOCHROME_P450"/>
    <property type="match status" value="1"/>
</dbReference>
<accession>A7VMU4</accession>
<organism>
    <name type="scientific">Alternaria alternata</name>
    <name type="common">Alternaria rot fungus</name>
    <name type="synonym">Torula alternata</name>
    <dbReference type="NCBI Taxonomy" id="5599"/>
    <lineage>
        <taxon>Eukaryota</taxon>
        <taxon>Fungi</taxon>
        <taxon>Dikarya</taxon>
        <taxon>Ascomycota</taxon>
        <taxon>Pezizomycotina</taxon>
        <taxon>Dothideomycetes</taxon>
        <taxon>Pleosporomycetidae</taxon>
        <taxon>Pleosporales</taxon>
        <taxon>Pleosporineae</taxon>
        <taxon>Pleosporaceae</taxon>
        <taxon>Alternaria</taxon>
        <taxon>Alternaria sect. Alternaria</taxon>
        <taxon>Alternaria alternata complex</taxon>
    </lineage>
</organism>
<sequence>MVAWNGTLVRPKLLIGASCQCVYNIYLHPLRHYPGPKLAAATGLYHWYWTLAGRIHRQLHKLHRQHGEVVRIGPDRLSFIAPEAWKDIYGPGTTSHKENKKDGRFYAPTPNGRRAMISLLDNQHHASVRRVFQPAFSDRSLRALEPVINKHVKRLMHTNLRQLARADEPFDLVHLLNCAIFDIMGDLMLSESFGMLEQSAYVEWIETLLVALRYESVGQFLLEYATLGKLLSFLMPPSARRKREQHVQYTAQRVDKRQQKSEATKRDIWGFLAAHENAEMLDIEDKHANASLFMVAGTETTITALSGLVFLLLQHPPCMRRLVAEIRDSFTCEDAINMDTLQGLSYLNACLSEALRLYPPVPLGNPRVTPADGNVICGHAVPGHTRVYVSTWAACRSASNFGDADSFMPERWLPDSGYDSDRKEASKPFSYGPRNCIGKSMAYHNIRIIIARILWNYDLLAAAESDGWMKQECFPLWDKKPLMVRVMLR</sequence>
<proteinExistence type="evidence at transcript level"/>